<protein>
    <recommendedName>
        <fullName evidence="2">D-galactonate dehydratase</fullName>
        <shortName evidence="2">GalD</shortName>
        <ecNumber evidence="2">4.2.1.6</ecNumber>
    </recommendedName>
</protein>
<comment type="function">
    <text evidence="2">Catalyzes the dehydration of D-galactonate to 2-keto-3-deoxy-D-galactonate.</text>
</comment>
<comment type="catalytic activity">
    <reaction evidence="2">
        <text>D-galactonate = 2-dehydro-3-deoxy-D-galactonate + H2O</text>
        <dbReference type="Rhea" id="RHEA:18649"/>
        <dbReference type="ChEBI" id="CHEBI:12931"/>
        <dbReference type="ChEBI" id="CHEBI:15377"/>
        <dbReference type="ChEBI" id="CHEBI:57989"/>
        <dbReference type="EC" id="4.2.1.6"/>
    </reaction>
</comment>
<comment type="cofactor">
    <cofactor evidence="2">
        <name>Mg(2+)</name>
        <dbReference type="ChEBI" id="CHEBI:18420"/>
    </cofactor>
    <text evidence="2">Binds 1 Mg(2+) ion per subunit.</text>
</comment>
<comment type="pathway">
    <text evidence="2">Carbohydrate acid metabolism; D-galactonate degradation; D-glyceraldehyde 3-phosphate and pyruvate from D-galactonate: step 1/3.</text>
</comment>
<comment type="miscellaneous">
    <text evidence="2">Reaction proceeds via an anti dehydration.</text>
</comment>
<comment type="similarity">
    <text evidence="2">Belongs to the mandelate racemase/muconate lactonizing enzyme family. GalD subfamily.</text>
</comment>
<evidence type="ECO:0000250" key="1"/>
<evidence type="ECO:0000255" key="2">
    <source>
        <dbReference type="HAMAP-Rule" id="MF_01289"/>
    </source>
</evidence>
<name>DGOD_ECOL5</name>
<accession>Q0TB15</accession>
<dbReference type="EC" id="4.2.1.6" evidence="2"/>
<dbReference type="EMBL" id="CP000247">
    <property type="protein sequence ID" value="ABG71864.1"/>
    <property type="molecule type" value="Genomic_DNA"/>
</dbReference>
<dbReference type="RefSeq" id="WP_000705012.1">
    <property type="nucleotide sequence ID" value="NC_008253.1"/>
</dbReference>
<dbReference type="SMR" id="Q0TB15"/>
<dbReference type="GeneID" id="89518589"/>
<dbReference type="KEGG" id="ecp:ECP_3893"/>
<dbReference type="HOGENOM" id="CLU_030273_3_2_6"/>
<dbReference type="UniPathway" id="UPA00081">
    <property type="reaction ID" value="UER00518"/>
</dbReference>
<dbReference type="Proteomes" id="UP000009182">
    <property type="component" value="Chromosome"/>
</dbReference>
<dbReference type="GO" id="GO:0008869">
    <property type="term" value="F:galactonate dehydratase activity"/>
    <property type="evidence" value="ECO:0007669"/>
    <property type="project" value="UniProtKB-UniRule"/>
</dbReference>
<dbReference type="GO" id="GO:0000287">
    <property type="term" value="F:magnesium ion binding"/>
    <property type="evidence" value="ECO:0007669"/>
    <property type="project" value="UniProtKB-UniRule"/>
</dbReference>
<dbReference type="GO" id="GO:0009063">
    <property type="term" value="P:amino acid catabolic process"/>
    <property type="evidence" value="ECO:0007669"/>
    <property type="project" value="InterPro"/>
</dbReference>
<dbReference type="GO" id="GO:0034194">
    <property type="term" value="P:D-galactonate catabolic process"/>
    <property type="evidence" value="ECO:0007669"/>
    <property type="project" value="UniProtKB-UniRule"/>
</dbReference>
<dbReference type="CDD" id="cd03325">
    <property type="entry name" value="D-galactonate_dehydratase"/>
    <property type="match status" value="1"/>
</dbReference>
<dbReference type="FunFam" id="3.20.20.120:FF:000008">
    <property type="entry name" value="D-galactonate dehydratase"/>
    <property type="match status" value="1"/>
</dbReference>
<dbReference type="FunFam" id="3.30.390.10:FF:000003">
    <property type="entry name" value="D-galactonate dehydratase"/>
    <property type="match status" value="1"/>
</dbReference>
<dbReference type="Gene3D" id="3.20.20.120">
    <property type="entry name" value="Enolase-like C-terminal domain"/>
    <property type="match status" value="1"/>
</dbReference>
<dbReference type="Gene3D" id="3.30.390.10">
    <property type="entry name" value="Enolase-like, N-terminal domain"/>
    <property type="match status" value="1"/>
</dbReference>
<dbReference type="HAMAP" id="MF_01289">
    <property type="entry name" value="Galacton_dehydrat"/>
    <property type="match status" value="1"/>
</dbReference>
<dbReference type="InterPro" id="IPR034593">
    <property type="entry name" value="DgoD-like"/>
</dbReference>
<dbReference type="InterPro" id="IPR036849">
    <property type="entry name" value="Enolase-like_C_sf"/>
</dbReference>
<dbReference type="InterPro" id="IPR029017">
    <property type="entry name" value="Enolase-like_N"/>
</dbReference>
<dbReference type="InterPro" id="IPR029065">
    <property type="entry name" value="Enolase_C-like"/>
</dbReference>
<dbReference type="InterPro" id="IPR023592">
    <property type="entry name" value="Galactonate_deHydtase"/>
</dbReference>
<dbReference type="InterPro" id="IPR018110">
    <property type="entry name" value="Mandel_Rmase/mucon_lact_enz_CS"/>
</dbReference>
<dbReference type="InterPro" id="IPR013342">
    <property type="entry name" value="Mandelate_racemase_C"/>
</dbReference>
<dbReference type="InterPro" id="IPR013341">
    <property type="entry name" value="Mandelate_racemase_N_dom"/>
</dbReference>
<dbReference type="NCBIfam" id="NF010624">
    <property type="entry name" value="PRK14017.1"/>
    <property type="match status" value="1"/>
</dbReference>
<dbReference type="PANTHER" id="PTHR48080:SF2">
    <property type="entry name" value="D-GALACTONATE DEHYDRATASE"/>
    <property type="match status" value="1"/>
</dbReference>
<dbReference type="PANTHER" id="PTHR48080">
    <property type="entry name" value="D-GALACTONATE DEHYDRATASE-RELATED"/>
    <property type="match status" value="1"/>
</dbReference>
<dbReference type="Pfam" id="PF13378">
    <property type="entry name" value="MR_MLE_C"/>
    <property type="match status" value="1"/>
</dbReference>
<dbReference type="Pfam" id="PF02746">
    <property type="entry name" value="MR_MLE_N"/>
    <property type="match status" value="1"/>
</dbReference>
<dbReference type="SFLD" id="SFLDF00003">
    <property type="entry name" value="D-galactonate_dehydratase"/>
    <property type="match status" value="1"/>
</dbReference>
<dbReference type="SFLD" id="SFLDG00179">
    <property type="entry name" value="mandelate_racemase"/>
    <property type="match status" value="1"/>
</dbReference>
<dbReference type="SMART" id="SM00922">
    <property type="entry name" value="MR_MLE"/>
    <property type="match status" value="1"/>
</dbReference>
<dbReference type="SUPFAM" id="SSF51604">
    <property type="entry name" value="Enolase C-terminal domain-like"/>
    <property type="match status" value="1"/>
</dbReference>
<dbReference type="SUPFAM" id="SSF54826">
    <property type="entry name" value="Enolase N-terminal domain-like"/>
    <property type="match status" value="1"/>
</dbReference>
<dbReference type="PROSITE" id="PS00908">
    <property type="entry name" value="MR_MLE_1"/>
    <property type="match status" value="1"/>
</dbReference>
<dbReference type="PROSITE" id="PS00909">
    <property type="entry name" value="MR_MLE_2"/>
    <property type="match status" value="1"/>
</dbReference>
<sequence length="382" mass="42553">MKITKITTYRLPPRWMFLKIETDEGVVGWGEPVIEGRARTVEAAVHELSDYLIGQDPSRINDLWQVMYRAGFYRGGPILMSAIAGIDQALWDIKGKVLNAPVWQLMGGLVRDKIKAYSWVGGDRPADVIDGIKTLREIGFDTFKLNGCEELGLIDNSRAVDAAVNTVAQIREAFGNQIEFGLDFHGRVSAPMAKVLIKELEPYRPLFIEEPVLAEQAEYYPKLAAQTHIPLAAGERMFSRFDFKRVLEAGGISILQPDLSHAGGITECYKIAGMAEAYDVTLAPHCPLGPIALAACLHIDFVSYNAVLQEQSMGIHYNKGAELLDFVKNKEDFSMVGGFFKPLTKPGLGVEIDEAKVIEFSKNAPDWRNPLWRHEDNSVAEW</sequence>
<keyword id="KW-0456">Lyase</keyword>
<keyword id="KW-0460">Magnesium</keyword>
<keyword id="KW-0479">Metal-binding</keyword>
<gene>
    <name evidence="2" type="primary">dgoD</name>
    <name type="ordered locus">ECP_3893</name>
</gene>
<feature type="chain" id="PRO_0000352629" description="D-galactonate dehydratase">
    <location>
        <begin position="1"/>
        <end position="382"/>
    </location>
</feature>
<feature type="active site" description="Proton donor" evidence="1">
    <location>
        <position position="185"/>
    </location>
</feature>
<feature type="active site" description="Proton acceptor" evidence="1">
    <location>
        <position position="285"/>
    </location>
</feature>
<feature type="binding site" evidence="2">
    <location>
        <position position="183"/>
    </location>
    <ligand>
        <name>Mg(2+)</name>
        <dbReference type="ChEBI" id="CHEBI:18420"/>
    </ligand>
</feature>
<feature type="binding site" evidence="2">
    <location>
        <position position="209"/>
    </location>
    <ligand>
        <name>Mg(2+)</name>
        <dbReference type="ChEBI" id="CHEBI:18420"/>
    </ligand>
</feature>
<feature type="binding site" evidence="2">
    <location>
        <position position="235"/>
    </location>
    <ligand>
        <name>Mg(2+)</name>
        <dbReference type="ChEBI" id="CHEBI:18420"/>
    </ligand>
</feature>
<feature type="site" description="Increases basicity of active site His" evidence="2">
    <location>
        <position position="258"/>
    </location>
</feature>
<feature type="site" description="Transition state stabilizer" evidence="2">
    <location>
        <position position="310"/>
    </location>
</feature>
<proteinExistence type="inferred from homology"/>
<reference key="1">
    <citation type="journal article" date="2006" name="Mol. Microbiol.">
        <title>Role of pathogenicity island-associated integrases in the genome plasticity of uropathogenic Escherichia coli strain 536.</title>
        <authorList>
            <person name="Hochhut B."/>
            <person name="Wilde C."/>
            <person name="Balling G."/>
            <person name="Middendorf B."/>
            <person name="Dobrindt U."/>
            <person name="Brzuszkiewicz E."/>
            <person name="Gottschalk G."/>
            <person name="Carniel E."/>
            <person name="Hacker J."/>
        </authorList>
    </citation>
    <scope>NUCLEOTIDE SEQUENCE [LARGE SCALE GENOMIC DNA]</scope>
    <source>
        <strain>536 / UPEC</strain>
    </source>
</reference>
<organism>
    <name type="scientific">Escherichia coli O6:K15:H31 (strain 536 / UPEC)</name>
    <dbReference type="NCBI Taxonomy" id="362663"/>
    <lineage>
        <taxon>Bacteria</taxon>
        <taxon>Pseudomonadati</taxon>
        <taxon>Pseudomonadota</taxon>
        <taxon>Gammaproteobacteria</taxon>
        <taxon>Enterobacterales</taxon>
        <taxon>Enterobacteriaceae</taxon>
        <taxon>Escherichia</taxon>
    </lineage>
</organism>